<sequence length="293" mass="31819">MPWIQLKLNTTGANAEDLSDALMEAGAVSITFQDTHDTPVFEPLPGETRLWGDTDVIGLFDAETDMNDVVAILENHPLLGAGFAHKIEQLEDKDWEREWMDNFHPMRFGERLWICPSWRDVPDENAVNVMLDPGLAFGTGTHPTTSLCLQWLDSLDLTGKTVIDFGCGSGILAIAALKLGAAKAIGIDIDPQAIQASRDNAERNGVSDRLELYLPKDQPEAMKADVVVANILAGPLRELAPLISVLPVSGGLLGLSGILASQAESVCEAYADSFALDPVVEKEEWCRITGRKN</sequence>
<protein>
    <recommendedName>
        <fullName evidence="1">Ribosomal protein L11 methyltransferase</fullName>
        <shortName evidence="1">L11 Mtase</shortName>
        <ecNumber evidence="1">2.1.1.-</ecNumber>
    </recommendedName>
</protein>
<comment type="function">
    <text evidence="1">Methylates ribosomal protein L11.</text>
</comment>
<comment type="catalytic activity">
    <reaction evidence="1">
        <text>L-lysyl-[protein] + 3 S-adenosyl-L-methionine = N(6),N(6),N(6)-trimethyl-L-lysyl-[protein] + 3 S-adenosyl-L-homocysteine + 3 H(+)</text>
        <dbReference type="Rhea" id="RHEA:54192"/>
        <dbReference type="Rhea" id="RHEA-COMP:9752"/>
        <dbReference type="Rhea" id="RHEA-COMP:13826"/>
        <dbReference type="ChEBI" id="CHEBI:15378"/>
        <dbReference type="ChEBI" id="CHEBI:29969"/>
        <dbReference type="ChEBI" id="CHEBI:57856"/>
        <dbReference type="ChEBI" id="CHEBI:59789"/>
        <dbReference type="ChEBI" id="CHEBI:61961"/>
    </reaction>
</comment>
<comment type="subcellular location">
    <subcellularLocation>
        <location evidence="1">Cytoplasm</location>
    </subcellularLocation>
</comment>
<comment type="similarity">
    <text evidence="1">Belongs to the methyltransferase superfamily. PrmA family.</text>
</comment>
<gene>
    <name evidence="1" type="primary">prmA</name>
    <name type="ordered locus">EcSMS35_3554</name>
</gene>
<organism>
    <name type="scientific">Escherichia coli (strain SMS-3-5 / SECEC)</name>
    <dbReference type="NCBI Taxonomy" id="439855"/>
    <lineage>
        <taxon>Bacteria</taxon>
        <taxon>Pseudomonadati</taxon>
        <taxon>Pseudomonadota</taxon>
        <taxon>Gammaproteobacteria</taxon>
        <taxon>Enterobacterales</taxon>
        <taxon>Enterobacteriaceae</taxon>
        <taxon>Escherichia</taxon>
    </lineage>
</organism>
<name>PRMA_ECOSM</name>
<evidence type="ECO:0000255" key="1">
    <source>
        <dbReference type="HAMAP-Rule" id="MF_00735"/>
    </source>
</evidence>
<keyword id="KW-0963">Cytoplasm</keyword>
<keyword id="KW-0489">Methyltransferase</keyword>
<keyword id="KW-0949">S-adenosyl-L-methionine</keyword>
<keyword id="KW-0808">Transferase</keyword>
<accession>B1LGM4</accession>
<proteinExistence type="inferred from homology"/>
<reference key="1">
    <citation type="journal article" date="2008" name="J. Bacteriol.">
        <title>Insights into the environmental resistance gene pool from the genome sequence of the multidrug-resistant environmental isolate Escherichia coli SMS-3-5.</title>
        <authorList>
            <person name="Fricke W.F."/>
            <person name="Wright M.S."/>
            <person name="Lindell A.H."/>
            <person name="Harkins D.M."/>
            <person name="Baker-Austin C."/>
            <person name="Ravel J."/>
            <person name="Stepanauskas R."/>
        </authorList>
    </citation>
    <scope>NUCLEOTIDE SEQUENCE [LARGE SCALE GENOMIC DNA]</scope>
    <source>
        <strain>SMS-3-5 / SECEC</strain>
    </source>
</reference>
<dbReference type="EC" id="2.1.1.-" evidence="1"/>
<dbReference type="EMBL" id="CP000970">
    <property type="protein sequence ID" value="ACB18647.1"/>
    <property type="molecule type" value="Genomic_DNA"/>
</dbReference>
<dbReference type="RefSeq" id="WP_001145820.1">
    <property type="nucleotide sequence ID" value="NC_010498.1"/>
</dbReference>
<dbReference type="SMR" id="B1LGM4"/>
<dbReference type="KEGG" id="ecm:EcSMS35_3554"/>
<dbReference type="HOGENOM" id="CLU_049382_4_1_6"/>
<dbReference type="Proteomes" id="UP000007011">
    <property type="component" value="Chromosome"/>
</dbReference>
<dbReference type="GO" id="GO:0005829">
    <property type="term" value="C:cytosol"/>
    <property type="evidence" value="ECO:0007669"/>
    <property type="project" value="TreeGrafter"/>
</dbReference>
<dbReference type="GO" id="GO:0016279">
    <property type="term" value="F:protein-lysine N-methyltransferase activity"/>
    <property type="evidence" value="ECO:0007669"/>
    <property type="project" value="TreeGrafter"/>
</dbReference>
<dbReference type="GO" id="GO:0032259">
    <property type="term" value="P:methylation"/>
    <property type="evidence" value="ECO:0007669"/>
    <property type="project" value="UniProtKB-KW"/>
</dbReference>
<dbReference type="CDD" id="cd02440">
    <property type="entry name" value="AdoMet_MTases"/>
    <property type="match status" value="1"/>
</dbReference>
<dbReference type="FunFam" id="3.40.50.150:FF:000021">
    <property type="entry name" value="Ribosomal protein L11 methyltransferase"/>
    <property type="match status" value="1"/>
</dbReference>
<dbReference type="Gene3D" id="3.40.50.150">
    <property type="entry name" value="Vaccinia Virus protein VP39"/>
    <property type="match status" value="1"/>
</dbReference>
<dbReference type="HAMAP" id="MF_00735">
    <property type="entry name" value="Methyltr_PrmA"/>
    <property type="match status" value="1"/>
</dbReference>
<dbReference type="InterPro" id="IPR050078">
    <property type="entry name" value="Ribosomal_L11_MeTrfase_PrmA"/>
</dbReference>
<dbReference type="InterPro" id="IPR004498">
    <property type="entry name" value="Ribosomal_PrmA_MeTrfase"/>
</dbReference>
<dbReference type="InterPro" id="IPR029063">
    <property type="entry name" value="SAM-dependent_MTases_sf"/>
</dbReference>
<dbReference type="NCBIfam" id="TIGR00406">
    <property type="entry name" value="prmA"/>
    <property type="match status" value="1"/>
</dbReference>
<dbReference type="PANTHER" id="PTHR43648">
    <property type="entry name" value="ELECTRON TRANSFER FLAVOPROTEIN BETA SUBUNIT LYSINE METHYLTRANSFERASE"/>
    <property type="match status" value="1"/>
</dbReference>
<dbReference type="PANTHER" id="PTHR43648:SF1">
    <property type="entry name" value="ELECTRON TRANSFER FLAVOPROTEIN BETA SUBUNIT LYSINE METHYLTRANSFERASE"/>
    <property type="match status" value="1"/>
</dbReference>
<dbReference type="Pfam" id="PF06325">
    <property type="entry name" value="PrmA"/>
    <property type="match status" value="1"/>
</dbReference>
<dbReference type="PIRSF" id="PIRSF000401">
    <property type="entry name" value="RPL11_MTase"/>
    <property type="match status" value="1"/>
</dbReference>
<dbReference type="SUPFAM" id="SSF53335">
    <property type="entry name" value="S-adenosyl-L-methionine-dependent methyltransferases"/>
    <property type="match status" value="1"/>
</dbReference>
<feature type="chain" id="PRO_1000192623" description="Ribosomal protein L11 methyltransferase">
    <location>
        <begin position="1"/>
        <end position="293"/>
    </location>
</feature>
<feature type="binding site" evidence="1">
    <location>
        <position position="145"/>
    </location>
    <ligand>
        <name>S-adenosyl-L-methionine</name>
        <dbReference type="ChEBI" id="CHEBI:59789"/>
    </ligand>
</feature>
<feature type="binding site" evidence="1">
    <location>
        <position position="166"/>
    </location>
    <ligand>
        <name>S-adenosyl-L-methionine</name>
        <dbReference type="ChEBI" id="CHEBI:59789"/>
    </ligand>
</feature>
<feature type="binding site" evidence="1">
    <location>
        <position position="188"/>
    </location>
    <ligand>
        <name>S-adenosyl-L-methionine</name>
        <dbReference type="ChEBI" id="CHEBI:59789"/>
    </ligand>
</feature>
<feature type="binding site" evidence="1">
    <location>
        <position position="230"/>
    </location>
    <ligand>
        <name>S-adenosyl-L-methionine</name>
        <dbReference type="ChEBI" id="CHEBI:59789"/>
    </ligand>
</feature>